<feature type="chain" id="PRO_0000413149" description="Inosine triphosphate pyrophosphatase">
    <location>
        <begin position="1"/>
        <end position="194"/>
    </location>
</feature>
<feature type="binding site" evidence="1">
    <location>
        <begin position="8"/>
        <end position="13"/>
    </location>
    <ligand>
        <name>ITP</name>
        <dbReference type="ChEBI" id="CHEBI:61402"/>
    </ligand>
</feature>
<feature type="binding site" evidence="1">
    <location>
        <position position="47"/>
    </location>
    <ligand>
        <name>Mg(2+)</name>
        <dbReference type="ChEBI" id="CHEBI:18420"/>
    </ligand>
</feature>
<feature type="binding site" evidence="1">
    <location>
        <position position="59"/>
    </location>
    <ligand>
        <name>ITP</name>
        <dbReference type="ChEBI" id="CHEBI:61402"/>
    </ligand>
</feature>
<feature type="binding site" evidence="1">
    <location>
        <begin position="75"/>
        <end position="76"/>
    </location>
    <ligand>
        <name>ITP</name>
        <dbReference type="ChEBI" id="CHEBI:61402"/>
    </ligand>
</feature>
<feature type="binding site" evidence="1">
    <location>
        <position position="92"/>
    </location>
    <ligand>
        <name>ITP</name>
        <dbReference type="ChEBI" id="CHEBI:61402"/>
    </ligand>
</feature>
<feature type="binding site" evidence="1">
    <location>
        <begin position="151"/>
        <end position="154"/>
    </location>
    <ligand>
        <name>ITP</name>
        <dbReference type="ChEBI" id="CHEBI:61402"/>
    </ligand>
</feature>
<feature type="binding site" evidence="1">
    <location>
        <position position="174"/>
    </location>
    <ligand>
        <name>ITP</name>
        <dbReference type="ChEBI" id="CHEBI:61402"/>
    </ligand>
</feature>
<feature type="binding site" evidence="1">
    <location>
        <begin position="179"/>
        <end position="180"/>
    </location>
    <ligand>
        <name>ITP</name>
        <dbReference type="ChEBI" id="CHEBI:61402"/>
    </ligand>
</feature>
<gene>
    <name evidence="1" type="primary">HAM1</name>
    <name type="ORF">PICST_72696</name>
</gene>
<keyword id="KW-0963">Cytoplasm</keyword>
<keyword id="KW-0378">Hydrolase</keyword>
<keyword id="KW-0460">Magnesium</keyword>
<keyword id="KW-0464">Manganese</keyword>
<keyword id="KW-0479">Metal-binding</keyword>
<keyword id="KW-0546">Nucleotide metabolism</keyword>
<keyword id="KW-0547">Nucleotide-binding</keyword>
<keyword id="KW-0539">Nucleus</keyword>
<keyword id="KW-1185">Reference proteome</keyword>
<accession>A3LVK6</accession>
<organism>
    <name type="scientific">Scheffersomyces stipitis (strain ATCC 58785 / CBS 6054 / NBRC 10063 / NRRL Y-11545)</name>
    <name type="common">Yeast</name>
    <name type="synonym">Pichia stipitis</name>
    <dbReference type="NCBI Taxonomy" id="322104"/>
    <lineage>
        <taxon>Eukaryota</taxon>
        <taxon>Fungi</taxon>
        <taxon>Dikarya</taxon>
        <taxon>Ascomycota</taxon>
        <taxon>Saccharomycotina</taxon>
        <taxon>Pichiomycetes</taxon>
        <taxon>Debaryomycetaceae</taxon>
        <taxon>Scheffersomyces</taxon>
    </lineage>
</organism>
<comment type="function">
    <text evidence="1">Pyrophosphatase that hydrolyzes non-canonical purine nucleotides such as inosine triphosphate (ITP), deoxyinosine triphosphate (dITP) or xanthosine 5'-triphosphate (XTP) to their respective monophosphate derivatives. The enzyme does not distinguish between the deoxy- and ribose forms. Probably excludes non-canonical purines from RNA and DNA precursor pools, thus preventing their incorporation into RNA and DNA and avoiding chromosomal lesions.</text>
</comment>
<comment type="catalytic activity">
    <reaction evidence="1">
        <text>ITP + H2O = IMP + diphosphate + H(+)</text>
        <dbReference type="Rhea" id="RHEA:29399"/>
        <dbReference type="ChEBI" id="CHEBI:15377"/>
        <dbReference type="ChEBI" id="CHEBI:15378"/>
        <dbReference type="ChEBI" id="CHEBI:33019"/>
        <dbReference type="ChEBI" id="CHEBI:58053"/>
        <dbReference type="ChEBI" id="CHEBI:61402"/>
        <dbReference type="EC" id="3.6.1.66"/>
    </reaction>
    <physiologicalReaction direction="left-to-right" evidence="1">
        <dbReference type="Rhea" id="RHEA:29400"/>
    </physiologicalReaction>
</comment>
<comment type="catalytic activity">
    <reaction evidence="1">
        <text>dITP + H2O = dIMP + diphosphate + H(+)</text>
        <dbReference type="Rhea" id="RHEA:28342"/>
        <dbReference type="ChEBI" id="CHEBI:15377"/>
        <dbReference type="ChEBI" id="CHEBI:15378"/>
        <dbReference type="ChEBI" id="CHEBI:33019"/>
        <dbReference type="ChEBI" id="CHEBI:61194"/>
        <dbReference type="ChEBI" id="CHEBI:61382"/>
        <dbReference type="EC" id="3.6.1.66"/>
    </reaction>
    <physiologicalReaction direction="left-to-right" evidence="1">
        <dbReference type="Rhea" id="RHEA:28343"/>
    </physiologicalReaction>
</comment>
<comment type="catalytic activity">
    <reaction evidence="1">
        <text>XTP + H2O = XMP + diphosphate + H(+)</text>
        <dbReference type="Rhea" id="RHEA:28610"/>
        <dbReference type="ChEBI" id="CHEBI:15377"/>
        <dbReference type="ChEBI" id="CHEBI:15378"/>
        <dbReference type="ChEBI" id="CHEBI:33019"/>
        <dbReference type="ChEBI" id="CHEBI:57464"/>
        <dbReference type="ChEBI" id="CHEBI:61314"/>
        <dbReference type="EC" id="3.6.1.66"/>
    </reaction>
    <physiologicalReaction direction="left-to-right" evidence="1">
        <dbReference type="Rhea" id="RHEA:28611"/>
    </physiologicalReaction>
</comment>
<comment type="cofactor">
    <cofactor evidence="1">
        <name>Mg(2+)</name>
        <dbReference type="ChEBI" id="CHEBI:18420"/>
    </cofactor>
    <cofactor evidence="1">
        <name>Mn(2+)</name>
        <dbReference type="ChEBI" id="CHEBI:29035"/>
    </cofactor>
    <text evidence="1">Binds 1 divalent metal cation per subunit; can use either Mg(2+) or Mn(2+).</text>
</comment>
<comment type="subunit">
    <text evidence="1">Homodimer.</text>
</comment>
<comment type="subcellular location">
    <subcellularLocation>
        <location evidence="1">Cytoplasm</location>
    </subcellularLocation>
    <subcellularLocation>
        <location evidence="1">Nucleus</location>
    </subcellularLocation>
</comment>
<comment type="similarity">
    <text evidence="1">Belongs to the HAM1 NTPase family.</text>
</comment>
<evidence type="ECO:0000255" key="1">
    <source>
        <dbReference type="HAMAP-Rule" id="MF_03148"/>
    </source>
</evidence>
<reference key="1">
    <citation type="journal article" date="2007" name="Nat. Biotechnol.">
        <title>Genome sequence of the lignocellulose-bioconverting and xylose-fermenting yeast Pichia stipitis.</title>
        <authorList>
            <person name="Jeffries T.W."/>
            <person name="Grigoriev I.V."/>
            <person name="Grimwood J."/>
            <person name="Laplaza J.M."/>
            <person name="Aerts A."/>
            <person name="Salamov A."/>
            <person name="Schmutz J."/>
            <person name="Lindquist E."/>
            <person name="Dehal P."/>
            <person name="Shapiro H."/>
            <person name="Jin Y.-S."/>
            <person name="Passoth V."/>
            <person name="Richardson P.M."/>
        </authorList>
    </citation>
    <scope>NUCLEOTIDE SEQUENCE [LARGE SCALE GENOMIC DNA]</scope>
    <source>
        <strain>ATCC 58785 / CBS 6054 / NBRC 10063 / NRRL Y-11545</strain>
    </source>
</reference>
<name>ITPA_PICST</name>
<sequence>MSTVTFVTGNANKLKEVIAILSGSQSEGGESKVGNFTIVNKSLDLDELQGSIEEVTIHKAKSAAEILGGPVLVEDTCLGFTAFNDLPGPYIKWFVKSVGLQGLVDMLYKFEDKSAKAICTFGYCEGPGKPVQLFQGITKGSIVESRGPTNFGWDSIFQPDGFDKTYAELDKEIKNSISHRFRALDKLRDFLVSQ</sequence>
<proteinExistence type="inferred from homology"/>
<protein>
    <recommendedName>
        <fullName evidence="1">Inosine triphosphate pyrophosphatase</fullName>
        <shortName evidence="1">ITPase</shortName>
        <shortName evidence="1">Inosine triphosphatase</shortName>
        <ecNumber evidence="1">3.6.1.66</ecNumber>
    </recommendedName>
    <alternativeName>
        <fullName evidence="1">Non-canonical purine NTP pyrophosphatase</fullName>
    </alternativeName>
    <alternativeName>
        <fullName evidence="1">Non-standard purine NTP pyrophosphatase</fullName>
    </alternativeName>
    <alternativeName>
        <fullName evidence="1">Nucleoside-triphosphate diphosphatase</fullName>
    </alternativeName>
    <alternativeName>
        <fullName evidence="1">Nucleoside-triphosphate pyrophosphatase</fullName>
        <shortName evidence="1">NTPase</shortName>
    </alternativeName>
    <alternativeName>
        <fullName evidence="1">XTP/dITP diphosphatase</fullName>
    </alternativeName>
</protein>
<dbReference type="EC" id="3.6.1.66" evidence="1"/>
<dbReference type="EMBL" id="CP000499">
    <property type="protein sequence ID" value="ABN67137.1"/>
    <property type="molecule type" value="Genomic_DNA"/>
</dbReference>
<dbReference type="RefSeq" id="XP_001385166.1">
    <property type="nucleotide sequence ID" value="XM_001385129.1"/>
</dbReference>
<dbReference type="SMR" id="A3LVK6"/>
<dbReference type="FunCoup" id="A3LVK6">
    <property type="interactions" value="773"/>
</dbReference>
<dbReference type="STRING" id="322104.A3LVK6"/>
<dbReference type="GeneID" id="4839424"/>
<dbReference type="KEGG" id="pic:PICST_72696"/>
<dbReference type="eggNOG" id="KOG3222">
    <property type="taxonomic scope" value="Eukaryota"/>
</dbReference>
<dbReference type="HOGENOM" id="CLU_082080_1_1_1"/>
<dbReference type="InParanoid" id="A3LVK6"/>
<dbReference type="OMA" id="YDPIFQP"/>
<dbReference type="OrthoDB" id="6288734at2759"/>
<dbReference type="Proteomes" id="UP000002258">
    <property type="component" value="Chromosome 5"/>
</dbReference>
<dbReference type="GO" id="GO:0005737">
    <property type="term" value="C:cytoplasm"/>
    <property type="evidence" value="ECO:0007669"/>
    <property type="project" value="UniProtKB-SubCell"/>
</dbReference>
<dbReference type="GO" id="GO:0005634">
    <property type="term" value="C:nucleus"/>
    <property type="evidence" value="ECO:0007669"/>
    <property type="project" value="UniProtKB-SubCell"/>
</dbReference>
<dbReference type="GO" id="GO:0035870">
    <property type="term" value="F:dITP diphosphatase activity"/>
    <property type="evidence" value="ECO:0007669"/>
    <property type="project" value="RHEA"/>
</dbReference>
<dbReference type="GO" id="GO:0036220">
    <property type="term" value="F:ITP diphosphatase activity"/>
    <property type="evidence" value="ECO:0007669"/>
    <property type="project" value="RHEA"/>
</dbReference>
<dbReference type="GO" id="GO:0046872">
    <property type="term" value="F:metal ion binding"/>
    <property type="evidence" value="ECO:0007669"/>
    <property type="project" value="UniProtKB-KW"/>
</dbReference>
<dbReference type="GO" id="GO:0000166">
    <property type="term" value="F:nucleotide binding"/>
    <property type="evidence" value="ECO:0007669"/>
    <property type="project" value="UniProtKB-KW"/>
</dbReference>
<dbReference type="GO" id="GO:0036222">
    <property type="term" value="F:XTP diphosphatase activity"/>
    <property type="evidence" value="ECO:0007669"/>
    <property type="project" value="RHEA"/>
</dbReference>
<dbReference type="GO" id="GO:0009204">
    <property type="term" value="P:deoxyribonucleoside triphosphate catabolic process"/>
    <property type="evidence" value="ECO:0007669"/>
    <property type="project" value="UniProtKB-UniRule"/>
</dbReference>
<dbReference type="GO" id="GO:0009117">
    <property type="term" value="P:nucleotide metabolic process"/>
    <property type="evidence" value="ECO:0007669"/>
    <property type="project" value="UniProtKB-KW"/>
</dbReference>
<dbReference type="CDD" id="cd00515">
    <property type="entry name" value="HAM1"/>
    <property type="match status" value="1"/>
</dbReference>
<dbReference type="FunFam" id="3.90.950.10:FF:000009">
    <property type="entry name" value="Inosine triphosphate pyrophosphatase"/>
    <property type="match status" value="1"/>
</dbReference>
<dbReference type="Gene3D" id="3.90.950.10">
    <property type="match status" value="1"/>
</dbReference>
<dbReference type="HAMAP" id="MF_03148">
    <property type="entry name" value="HAM1_NTPase"/>
    <property type="match status" value="1"/>
</dbReference>
<dbReference type="InterPro" id="IPR027502">
    <property type="entry name" value="ITPase"/>
</dbReference>
<dbReference type="InterPro" id="IPR029001">
    <property type="entry name" value="ITPase-like_fam"/>
</dbReference>
<dbReference type="InterPro" id="IPR002637">
    <property type="entry name" value="RdgB/HAM1"/>
</dbReference>
<dbReference type="NCBIfam" id="TIGR00042">
    <property type="entry name" value="RdgB/HAM1 family non-canonical purine NTP pyrophosphatase"/>
    <property type="match status" value="1"/>
</dbReference>
<dbReference type="PANTHER" id="PTHR11067:SF9">
    <property type="entry name" value="INOSINE TRIPHOSPHATE PYROPHOSPHATASE"/>
    <property type="match status" value="1"/>
</dbReference>
<dbReference type="PANTHER" id="PTHR11067">
    <property type="entry name" value="INOSINE TRIPHOSPHATE PYROPHOSPHATASE/HAM1 PROTEIN"/>
    <property type="match status" value="1"/>
</dbReference>
<dbReference type="Pfam" id="PF01725">
    <property type="entry name" value="Ham1p_like"/>
    <property type="match status" value="1"/>
</dbReference>
<dbReference type="SUPFAM" id="SSF52972">
    <property type="entry name" value="ITPase-like"/>
    <property type="match status" value="1"/>
</dbReference>